<comment type="function">
    <text evidence="1">Cell wall formation. Catalyzes the transfer of a GlcNAc subunit on undecaprenyl-pyrophosphoryl-MurNAc-pentapeptide (lipid intermediate I) to form undecaprenyl-pyrophosphoryl-MurNAc-(pentapeptide)GlcNAc (lipid intermediate II).</text>
</comment>
<comment type="catalytic activity">
    <reaction evidence="1">
        <text>di-trans,octa-cis-undecaprenyl diphospho-N-acetyl-alpha-D-muramoyl-L-alanyl-D-glutamyl-meso-2,6-diaminopimeloyl-D-alanyl-D-alanine + UDP-N-acetyl-alpha-D-glucosamine = di-trans,octa-cis-undecaprenyl diphospho-[N-acetyl-alpha-D-glucosaminyl-(1-&gt;4)]-N-acetyl-alpha-D-muramoyl-L-alanyl-D-glutamyl-meso-2,6-diaminopimeloyl-D-alanyl-D-alanine + UDP + H(+)</text>
        <dbReference type="Rhea" id="RHEA:31227"/>
        <dbReference type="ChEBI" id="CHEBI:15378"/>
        <dbReference type="ChEBI" id="CHEBI:57705"/>
        <dbReference type="ChEBI" id="CHEBI:58223"/>
        <dbReference type="ChEBI" id="CHEBI:61387"/>
        <dbReference type="ChEBI" id="CHEBI:61388"/>
        <dbReference type="EC" id="2.4.1.227"/>
    </reaction>
</comment>
<comment type="pathway">
    <text evidence="1">Cell wall biogenesis; peptidoglycan biosynthesis.</text>
</comment>
<comment type="subcellular location">
    <subcellularLocation>
        <location evidence="1">Cell membrane</location>
        <topology evidence="1">Peripheral membrane protein</topology>
        <orientation evidence="1">Cytoplasmic side</orientation>
    </subcellularLocation>
</comment>
<comment type="similarity">
    <text evidence="1">Belongs to the glycosyltransferase 28 family. MurG subfamily.</text>
</comment>
<dbReference type="EC" id="2.4.1.227" evidence="1"/>
<dbReference type="EMBL" id="CP001104">
    <property type="protein sequence ID" value="ACR71089.1"/>
    <property type="molecule type" value="Genomic_DNA"/>
</dbReference>
<dbReference type="RefSeq" id="WP_012738327.1">
    <property type="nucleotide sequence ID" value="NC_012778.1"/>
</dbReference>
<dbReference type="SMR" id="C4Z1B5"/>
<dbReference type="STRING" id="515620.EUBELI_00052"/>
<dbReference type="CAZy" id="GT28">
    <property type="family name" value="Glycosyltransferase Family 28"/>
</dbReference>
<dbReference type="GeneID" id="41354850"/>
<dbReference type="KEGG" id="eel:EUBELI_00052"/>
<dbReference type="eggNOG" id="COG0707">
    <property type="taxonomic scope" value="Bacteria"/>
</dbReference>
<dbReference type="HOGENOM" id="CLU_037404_0_0_9"/>
<dbReference type="UniPathway" id="UPA00219"/>
<dbReference type="Proteomes" id="UP000001476">
    <property type="component" value="Chromosome"/>
</dbReference>
<dbReference type="GO" id="GO:0005886">
    <property type="term" value="C:plasma membrane"/>
    <property type="evidence" value="ECO:0007669"/>
    <property type="project" value="UniProtKB-SubCell"/>
</dbReference>
<dbReference type="GO" id="GO:0051991">
    <property type="term" value="F:UDP-N-acetyl-D-glucosamine:N-acetylmuramoyl-L-alanyl-D-glutamyl-meso-2,6-diaminopimelyl-D-alanyl-D-alanine-diphosphoundecaprenol 4-beta-N-acetylglucosaminlytransferase activity"/>
    <property type="evidence" value="ECO:0007669"/>
    <property type="project" value="RHEA"/>
</dbReference>
<dbReference type="GO" id="GO:0050511">
    <property type="term" value="F:undecaprenyldiphospho-muramoylpentapeptide beta-N-acetylglucosaminyltransferase activity"/>
    <property type="evidence" value="ECO:0007669"/>
    <property type="project" value="UniProtKB-UniRule"/>
</dbReference>
<dbReference type="GO" id="GO:0005975">
    <property type="term" value="P:carbohydrate metabolic process"/>
    <property type="evidence" value="ECO:0007669"/>
    <property type="project" value="InterPro"/>
</dbReference>
<dbReference type="GO" id="GO:0051301">
    <property type="term" value="P:cell division"/>
    <property type="evidence" value="ECO:0007669"/>
    <property type="project" value="UniProtKB-KW"/>
</dbReference>
<dbReference type="GO" id="GO:0071555">
    <property type="term" value="P:cell wall organization"/>
    <property type="evidence" value="ECO:0007669"/>
    <property type="project" value="UniProtKB-KW"/>
</dbReference>
<dbReference type="GO" id="GO:0030259">
    <property type="term" value="P:lipid glycosylation"/>
    <property type="evidence" value="ECO:0007669"/>
    <property type="project" value="UniProtKB-UniRule"/>
</dbReference>
<dbReference type="GO" id="GO:0009252">
    <property type="term" value="P:peptidoglycan biosynthetic process"/>
    <property type="evidence" value="ECO:0007669"/>
    <property type="project" value="UniProtKB-UniRule"/>
</dbReference>
<dbReference type="GO" id="GO:0008360">
    <property type="term" value="P:regulation of cell shape"/>
    <property type="evidence" value="ECO:0007669"/>
    <property type="project" value="UniProtKB-KW"/>
</dbReference>
<dbReference type="CDD" id="cd03785">
    <property type="entry name" value="GT28_MurG"/>
    <property type="match status" value="1"/>
</dbReference>
<dbReference type="Gene3D" id="3.40.50.2000">
    <property type="entry name" value="Glycogen Phosphorylase B"/>
    <property type="match status" value="2"/>
</dbReference>
<dbReference type="HAMAP" id="MF_00033">
    <property type="entry name" value="MurG"/>
    <property type="match status" value="1"/>
</dbReference>
<dbReference type="InterPro" id="IPR006009">
    <property type="entry name" value="GlcNAc_MurG"/>
</dbReference>
<dbReference type="InterPro" id="IPR007235">
    <property type="entry name" value="Glyco_trans_28_C"/>
</dbReference>
<dbReference type="InterPro" id="IPR004276">
    <property type="entry name" value="GlycoTrans_28_N"/>
</dbReference>
<dbReference type="NCBIfam" id="TIGR01133">
    <property type="entry name" value="murG"/>
    <property type="match status" value="1"/>
</dbReference>
<dbReference type="NCBIfam" id="NF009102">
    <property type="entry name" value="PRK12446.1"/>
    <property type="match status" value="1"/>
</dbReference>
<dbReference type="PANTHER" id="PTHR21015:SF27">
    <property type="entry name" value="UDP-N-ACETYLGLUCOSAMINE--N-ACETYLMURAMYL-(PENTAPEPTIDE) PYROPHOSPHORYL-UNDECAPRENOL N-ACETYLGLUCOSAMINE TRANSFERASE"/>
    <property type="match status" value="1"/>
</dbReference>
<dbReference type="PANTHER" id="PTHR21015">
    <property type="entry name" value="UDP-N-ACETYLGLUCOSAMINE--N-ACETYLMURAMYL-(PENTAPEPTIDE) PYROPHOSPHORYL-UNDECAPRENOL N-ACETYLGLUCOSAMINE TRANSFERASE 1"/>
    <property type="match status" value="1"/>
</dbReference>
<dbReference type="Pfam" id="PF04101">
    <property type="entry name" value="Glyco_tran_28_C"/>
    <property type="match status" value="1"/>
</dbReference>
<dbReference type="Pfam" id="PF03033">
    <property type="entry name" value="Glyco_transf_28"/>
    <property type="match status" value="1"/>
</dbReference>
<dbReference type="SUPFAM" id="SSF53756">
    <property type="entry name" value="UDP-Glycosyltransferase/glycogen phosphorylase"/>
    <property type="match status" value="1"/>
</dbReference>
<evidence type="ECO:0000255" key="1">
    <source>
        <dbReference type="HAMAP-Rule" id="MF_00033"/>
    </source>
</evidence>
<name>MURG_LACE2</name>
<reference key="1">
    <citation type="journal article" date="2009" name="Proc. Natl. Acad. Sci. U.S.A.">
        <title>Characterizing a model human gut microbiota composed of members of its two dominant bacterial phyla.</title>
        <authorList>
            <person name="Mahowald M.A."/>
            <person name="Rey F.E."/>
            <person name="Seedorf H."/>
            <person name="Turnbaugh P.J."/>
            <person name="Fulton R.S."/>
            <person name="Wollam A."/>
            <person name="Shah N."/>
            <person name="Wang C."/>
            <person name="Magrini V."/>
            <person name="Wilson R.K."/>
            <person name="Cantarel B.L."/>
            <person name="Coutinho P.M."/>
            <person name="Henrissat B."/>
            <person name="Crock L.W."/>
            <person name="Russell A."/>
            <person name="Verberkmoes N.C."/>
            <person name="Hettich R.L."/>
            <person name="Gordon J.I."/>
        </authorList>
    </citation>
    <scope>NUCLEOTIDE SEQUENCE [LARGE SCALE GENOMIC DNA]</scope>
    <source>
        <strain>ATCC 27750 / DSM 3376 / VPI C15-48 / C15-B4</strain>
    </source>
</reference>
<organism>
    <name type="scientific">Lachnospira eligens (strain ATCC 27750 / DSM 3376 / VPI C15-48 / C15-B4)</name>
    <name type="common">Eubacterium eligens</name>
    <dbReference type="NCBI Taxonomy" id="515620"/>
    <lineage>
        <taxon>Bacteria</taxon>
        <taxon>Bacillati</taxon>
        <taxon>Bacillota</taxon>
        <taxon>Clostridia</taxon>
        <taxon>Lachnospirales</taxon>
        <taxon>Lachnospiraceae</taxon>
        <taxon>Lachnospira</taxon>
    </lineage>
</organism>
<proteinExistence type="inferred from homology"/>
<gene>
    <name evidence="1" type="primary">murG</name>
    <name type="ordered locus">EUBELI_00052</name>
</gene>
<keyword id="KW-0131">Cell cycle</keyword>
<keyword id="KW-0132">Cell division</keyword>
<keyword id="KW-1003">Cell membrane</keyword>
<keyword id="KW-0133">Cell shape</keyword>
<keyword id="KW-0961">Cell wall biogenesis/degradation</keyword>
<keyword id="KW-0328">Glycosyltransferase</keyword>
<keyword id="KW-0472">Membrane</keyword>
<keyword id="KW-0573">Peptidoglycan synthesis</keyword>
<keyword id="KW-1185">Reference proteome</keyword>
<keyword id="KW-0808">Transferase</keyword>
<protein>
    <recommendedName>
        <fullName evidence="1">UDP-N-acetylglucosamine--N-acetylmuramyl-(pentapeptide) pyrophosphoryl-undecaprenol N-acetylglucosamine transferase</fullName>
        <ecNumber evidence="1">2.4.1.227</ecNumber>
    </recommendedName>
    <alternativeName>
        <fullName evidence="1">Undecaprenyl-PP-MurNAc-pentapeptide-UDPGlcNAc GlcNAc transferase</fullName>
    </alternativeName>
</protein>
<sequence length="354" mass="38805">MKKIVLTGGGTAGHVTPNIALLPSLKEAGYEVFYIGSYTGIEKTLIEDLGIPYYGISSGKLRRYRSLKNLSDPFRVLHGLFQAKRLMKKIKPDIVFSKGGFVSVPVVLAAGSRHIPVIIHESDMTPGLANKIAMRKATKICCNFPETLKYLPEGKAVLTGSPIRQELLLGNKAAGLDLCNFTTDKPIILVVGGSTGAVHVNDAVRSILPELLKDFQVVHLCGKGKMDDSLNGTPGYVQFEYISEQMRDLFAISSIVISRAGANAICELLALKKPNLLIPLSANASRGDQILNANSFKEHGYSMVLTEEDMNKDTLLAAVRKLYADRHQYIINMEKSEQQDSIDKIMNLIKDNSK</sequence>
<accession>C4Z1B5</accession>
<feature type="chain" id="PRO_1000202020" description="UDP-N-acetylglucosamine--N-acetylmuramyl-(pentapeptide) pyrophosphoryl-undecaprenol N-acetylglucosamine transferase">
    <location>
        <begin position="1"/>
        <end position="354"/>
    </location>
</feature>
<feature type="binding site" evidence="1">
    <location>
        <begin position="11"/>
        <end position="13"/>
    </location>
    <ligand>
        <name>UDP-N-acetyl-alpha-D-glucosamine</name>
        <dbReference type="ChEBI" id="CHEBI:57705"/>
    </ligand>
</feature>
<feature type="binding site" evidence="1">
    <location>
        <position position="164"/>
    </location>
    <ligand>
        <name>UDP-N-acetyl-alpha-D-glucosamine</name>
        <dbReference type="ChEBI" id="CHEBI:57705"/>
    </ligand>
</feature>
<feature type="binding site" evidence="1">
    <location>
        <position position="194"/>
    </location>
    <ligand>
        <name>UDP-N-acetyl-alpha-D-glucosamine</name>
        <dbReference type="ChEBI" id="CHEBI:57705"/>
    </ligand>
</feature>
<feature type="binding site" evidence="1">
    <location>
        <position position="289"/>
    </location>
    <ligand>
        <name>UDP-N-acetyl-alpha-D-glucosamine</name>
        <dbReference type="ChEBI" id="CHEBI:57705"/>
    </ligand>
</feature>